<comment type="function">
    <text evidence="1">Phosphorolytic 3'-5' exoribonuclease that plays an important role in tRNA 3'-end maturation. Removes nucleotide residues following the 3'-CCA terminus of tRNAs; can also add nucleotides to the ends of RNA molecules by using nucleoside diphosphates as substrates, but this may not be physiologically important. Probably plays a role in initiation of 16S rRNA degradation (leading to ribosome degradation) during starvation.</text>
</comment>
<comment type="catalytic activity">
    <reaction evidence="1">
        <text>tRNA(n+1) + phosphate = tRNA(n) + a ribonucleoside 5'-diphosphate</text>
        <dbReference type="Rhea" id="RHEA:10628"/>
        <dbReference type="Rhea" id="RHEA-COMP:17343"/>
        <dbReference type="Rhea" id="RHEA-COMP:17344"/>
        <dbReference type="ChEBI" id="CHEBI:43474"/>
        <dbReference type="ChEBI" id="CHEBI:57930"/>
        <dbReference type="ChEBI" id="CHEBI:173114"/>
        <dbReference type="EC" id="2.7.7.56"/>
    </reaction>
</comment>
<comment type="subunit">
    <text evidence="1">Homohexameric ring arranged as a trimer of dimers.</text>
</comment>
<comment type="similarity">
    <text evidence="1">Belongs to the RNase PH family.</text>
</comment>
<accession>Q6DAW2</accession>
<reference key="1">
    <citation type="journal article" date="2004" name="Proc. Natl. Acad. Sci. U.S.A.">
        <title>Genome sequence of the enterobacterial phytopathogen Erwinia carotovora subsp. atroseptica and characterization of virulence factors.</title>
        <authorList>
            <person name="Bell K.S."/>
            <person name="Sebaihia M."/>
            <person name="Pritchard L."/>
            <person name="Holden M.T.G."/>
            <person name="Hyman L.J."/>
            <person name="Holeva M.C."/>
            <person name="Thomson N.R."/>
            <person name="Bentley S.D."/>
            <person name="Churcher L.J.C."/>
            <person name="Mungall K."/>
            <person name="Atkin R."/>
            <person name="Bason N."/>
            <person name="Brooks K."/>
            <person name="Chillingworth T."/>
            <person name="Clark K."/>
            <person name="Doggett J."/>
            <person name="Fraser A."/>
            <person name="Hance Z."/>
            <person name="Hauser H."/>
            <person name="Jagels K."/>
            <person name="Moule S."/>
            <person name="Norbertczak H."/>
            <person name="Ormond D."/>
            <person name="Price C."/>
            <person name="Quail M.A."/>
            <person name="Sanders M."/>
            <person name="Walker D."/>
            <person name="Whitehead S."/>
            <person name="Salmond G.P.C."/>
            <person name="Birch P.R.J."/>
            <person name="Parkhill J."/>
            <person name="Toth I.K."/>
        </authorList>
    </citation>
    <scope>NUCLEOTIDE SEQUENCE [LARGE SCALE GENOMIC DNA]</scope>
    <source>
        <strain>SCRI 1043 / ATCC BAA-672</strain>
    </source>
</reference>
<protein>
    <recommendedName>
        <fullName evidence="1">Ribonuclease PH</fullName>
        <shortName evidence="1">RNase PH</shortName>
        <ecNumber evidence="1">2.7.7.56</ecNumber>
    </recommendedName>
    <alternativeName>
        <fullName evidence="1">tRNA nucleotidyltransferase</fullName>
    </alternativeName>
</protein>
<feature type="chain" id="PRO_0000139892" description="Ribonuclease PH">
    <location>
        <begin position="1"/>
        <end position="238"/>
    </location>
</feature>
<feature type="binding site" evidence="1">
    <location>
        <position position="86"/>
    </location>
    <ligand>
        <name>phosphate</name>
        <dbReference type="ChEBI" id="CHEBI:43474"/>
        <note>substrate</note>
    </ligand>
</feature>
<feature type="binding site" evidence="1">
    <location>
        <begin position="124"/>
        <end position="126"/>
    </location>
    <ligand>
        <name>phosphate</name>
        <dbReference type="ChEBI" id="CHEBI:43474"/>
        <note>substrate</note>
    </ligand>
</feature>
<name>RNPH_PECAS</name>
<proteinExistence type="inferred from homology"/>
<gene>
    <name evidence="1" type="primary">rph</name>
    <name type="ordered locus">ECA0140</name>
</gene>
<evidence type="ECO:0000255" key="1">
    <source>
        <dbReference type="HAMAP-Rule" id="MF_00564"/>
    </source>
</evidence>
<keyword id="KW-0548">Nucleotidyltransferase</keyword>
<keyword id="KW-1185">Reference proteome</keyword>
<keyword id="KW-0694">RNA-binding</keyword>
<keyword id="KW-0698">rRNA processing</keyword>
<keyword id="KW-0808">Transferase</keyword>
<keyword id="KW-0819">tRNA processing</keyword>
<keyword id="KW-0820">tRNA-binding</keyword>
<dbReference type="EC" id="2.7.7.56" evidence="1"/>
<dbReference type="EMBL" id="BX950851">
    <property type="protein sequence ID" value="CAG73060.1"/>
    <property type="molecule type" value="Genomic_DNA"/>
</dbReference>
<dbReference type="RefSeq" id="WP_011091783.1">
    <property type="nucleotide sequence ID" value="NC_004547.2"/>
</dbReference>
<dbReference type="SMR" id="Q6DAW2"/>
<dbReference type="STRING" id="218491.ECA0140"/>
<dbReference type="KEGG" id="eca:ECA0140"/>
<dbReference type="eggNOG" id="COG0689">
    <property type="taxonomic scope" value="Bacteria"/>
</dbReference>
<dbReference type="HOGENOM" id="CLU_050858_0_0_6"/>
<dbReference type="OrthoDB" id="9802265at2"/>
<dbReference type="Proteomes" id="UP000007966">
    <property type="component" value="Chromosome"/>
</dbReference>
<dbReference type="GO" id="GO:0000175">
    <property type="term" value="F:3'-5'-RNA exonuclease activity"/>
    <property type="evidence" value="ECO:0007669"/>
    <property type="project" value="UniProtKB-UniRule"/>
</dbReference>
<dbReference type="GO" id="GO:0000049">
    <property type="term" value="F:tRNA binding"/>
    <property type="evidence" value="ECO:0007669"/>
    <property type="project" value="UniProtKB-UniRule"/>
</dbReference>
<dbReference type="GO" id="GO:0009022">
    <property type="term" value="F:tRNA nucleotidyltransferase activity"/>
    <property type="evidence" value="ECO:0007669"/>
    <property type="project" value="UniProtKB-UniRule"/>
</dbReference>
<dbReference type="GO" id="GO:0016075">
    <property type="term" value="P:rRNA catabolic process"/>
    <property type="evidence" value="ECO:0007669"/>
    <property type="project" value="UniProtKB-UniRule"/>
</dbReference>
<dbReference type="GO" id="GO:0006364">
    <property type="term" value="P:rRNA processing"/>
    <property type="evidence" value="ECO:0007669"/>
    <property type="project" value="UniProtKB-KW"/>
</dbReference>
<dbReference type="GO" id="GO:0008033">
    <property type="term" value="P:tRNA processing"/>
    <property type="evidence" value="ECO:0007669"/>
    <property type="project" value="UniProtKB-UniRule"/>
</dbReference>
<dbReference type="CDD" id="cd11362">
    <property type="entry name" value="RNase_PH_bact"/>
    <property type="match status" value="1"/>
</dbReference>
<dbReference type="FunFam" id="3.30.230.70:FF:000003">
    <property type="entry name" value="Ribonuclease PH"/>
    <property type="match status" value="1"/>
</dbReference>
<dbReference type="Gene3D" id="3.30.230.70">
    <property type="entry name" value="GHMP Kinase, N-terminal domain"/>
    <property type="match status" value="1"/>
</dbReference>
<dbReference type="HAMAP" id="MF_00564">
    <property type="entry name" value="RNase_PH"/>
    <property type="match status" value="1"/>
</dbReference>
<dbReference type="InterPro" id="IPR001247">
    <property type="entry name" value="ExoRNase_PH_dom1"/>
</dbReference>
<dbReference type="InterPro" id="IPR015847">
    <property type="entry name" value="ExoRNase_PH_dom2"/>
</dbReference>
<dbReference type="InterPro" id="IPR036345">
    <property type="entry name" value="ExoRNase_PH_dom2_sf"/>
</dbReference>
<dbReference type="InterPro" id="IPR027408">
    <property type="entry name" value="PNPase/RNase_PH_dom_sf"/>
</dbReference>
<dbReference type="InterPro" id="IPR020568">
    <property type="entry name" value="Ribosomal_Su5_D2-typ_SF"/>
</dbReference>
<dbReference type="InterPro" id="IPR050080">
    <property type="entry name" value="RNase_PH"/>
</dbReference>
<dbReference type="InterPro" id="IPR002381">
    <property type="entry name" value="RNase_PH_bac-type"/>
</dbReference>
<dbReference type="InterPro" id="IPR018336">
    <property type="entry name" value="RNase_PH_CS"/>
</dbReference>
<dbReference type="NCBIfam" id="TIGR01966">
    <property type="entry name" value="RNasePH"/>
    <property type="match status" value="1"/>
</dbReference>
<dbReference type="PANTHER" id="PTHR11953">
    <property type="entry name" value="EXOSOME COMPLEX COMPONENT"/>
    <property type="match status" value="1"/>
</dbReference>
<dbReference type="PANTHER" id="PTHR11953:SF0">
    <property type="entry name" value="EXOSOME COMPLEX COMPONENT RRP41"/>
    <property type="match status" value="1"/>
</dbReference>
<dbReference type="Pfam" id="PF01138">
    <property type="entry name" value="RNase_PH"/>
    <property type="match status" value="1"/>
</dbReference>
<dbReference type="Pfam" id="PF03725">
    <property type="entry name" value="RNase_PH_C"/>
    <property type="match status" value="1"/>
</dbReference>
<dbReference type="SUPFAM" id="SSF55666">
    <property type="entry name" value="Ribonuclease PH domain 2-like"/>
    <property type="match status" value="1"/>
</dbReference>
<dbReference type="SUPFAM" id="SSF54211">
    <property type="entry name" value="Ribosomal protein S5 domain 2-like"/>
    <property type="match status" value="1"/>
</dbReference>
<dbReference type="PROSITE" id="PS01277">
    <property type="entry name" value="RIBONUCLEASE_PH"/>
    <property type="match status" value="1"/>
</dbReference>
<organism>
    <name type="scientific">Pectobacterium atrosepticum (strain SCRI 1043 / ATCC BAA-672)</name>
    <name type="common">Erwinia carotovora subsp. atroseptica</name>
    <dbReference type="NCBI Taxonomy" id="218491"/>
    <lineage>
        <taxon>Bacteria</taxon>
        <taxon>Pseudomonadati</taxon>
        <taxon>Pseudomonadota</taxon>
        <taxon>Gammaproteobacteria</taxon>
        <taxon>Enterobacterales</taxon>
        <taxon>Pectobacteriaceae</taxon>
        <taxon>Pectobacterium</taxon>
    </lineage>
</organism>
<sequence length="238" mass="25428">MRPTGRSAQQVRPLTFTRHYTKHAEGSVLVEFGDTKVLCNATVEEGVPRFLKGQGQGWVTAEYGMLPRATHSRNAREAAKGKQGGRTLEIQRLIARSLRAAIDLKVLGEYTITLDCDVLQADGGTRTASITGACVALADALNQMVANGKLKKNPMKGMVAAVSVGIVKGEALCDLEYVEDSAAETDMNVVMTEDGRMVEVQGTAEGEPFSHEELLTLLALARGGIDTIVQAQKAALAD</sequence>